<evidence type="ECO:0000255" key="1">
    <source>
        <dbReference type="HAMAP-Rule" id="MF_00107"/>
    </source>
</evidence>
<keyword id="KW-0414">Isoprene biosynthesis</keyword>
<keyword id="KW-0456">Lyase</keyword>
<keyword id="KW-0479">Metal-binding</keyword>
<keyword id="KW-1185">Reference proteome</keyword>
<accession>Q6D1B4</accession>
<proteinExistence type="inferred from homology"/>
<feature type="chain" id="PRO_0000189468" description="2-C-methyl-D-erythritol 2,4-cyclodiphosphate synthase">
    <location>
        <begin position="1"/>
        <end position="165"/>
    </location>
</feature>
<feature type="binding site" evidence="1">
    <location>
        <begin position="8"/>
        <end position="10"/>
    </location>
    <ligand>
        <name>4-CDP-2-C-methyl-D-erythritol 2-phosphate</name>
        <dbReference type="ChEBI" id="CHEBI:57919"/>
    </ligand>
</feature>
<feature type="binding site" evidence="1">
    <location>
        <position position="8"/>
    </location>
    <ligand>
        <name>a divalent metal cation</name>
        <dbReference type="ChEBI" id="CHEBI:60240"/>
    </ligand>
</feature>
<feature type="binding site" evidence="1">
    <location>
        <position position="10"/>
    </location>
    <ligand>
        <name>a divalent metal cation</name>
        <dbReference type="ChEBI" id="CHEBI:60240"/>
    </ligand>
</feature>
<feature type="binding site" evidence="1">
    <location>
        <begin position="34"/>
        <end position="35"/>
    </location>
    <ligand>
        <name>4-CDP-2-C-methyl-D-erythritol 2-phosphate</name>
        <dbReference type="ChEBI" id="CHEBI:57919"/>
    </ligand>
</feature>
<feature type="binding site" evidence="1">
    <location>
        <position position="42"/>
    </location>
    <ligand>
        <name>a divalent metal cation</name>
        <dbReference type="ChEBI" id="CHEBI:60240"/>
    </ligand>
</feature>
<feature type="binding site" evidence="1">
    <location>
        <begin position="56"/>
        <end position="58"/>
    </location>
    <ligand>
        <name>4-CDP-2-C-methyl-D-erythritol 2-phosphate</name>
        <dbReference type="ChEBI" id="CHEBI:57919"/>
    </ligand>
</feature>
<feature type="binding site" evidence="1">
    <location>
        <begin position="61"/>
        <end position="65"/>
    </location>
    <ligand>
        <name>4-CDP-2-C-methyl-D-erythritol 2-phosphate</name>
        <dbReference type="ChEBI" id="CHEBI:57919"/>
    </ligand>
</feature>
<feature type="binding site" evidence="1">
    <location>
        <begin position="100"/>
        <end position="106"/>
    </location>
    <ligand>
        <name>4-CDP-2-C-methyl-D-erythritol 2-phosphate</name>
        <dbReference type="ChEBI" id="CHEBI:57919"/>
    </ligand>
</feature>
<feature type="binding site" evidence="1">
    <location>
        <begin position="132"/>
        <end position="135"/>
    </location>
    <ligand>
        <name>4-CDP-2-C-methyl-D-erythritol 2-phosphate</name>
        <dbReference type="ChEBI" id="CHEBI:57919"/>
    </ligand>
</feature>
<feature type="binding site" evidence="1">
    <location>
        <position position="139"/>
    </location>
    <ligand>
        <name>4-CDP-2-C-methyl-D-erythritol 2-phosphate</name>
        <dbReference type="ChEBI" id="CHEBI:57919"/>
    </ligand>
</feature>
<feature type="binding site" evidence="1">
    <location>
        <position position="142"/>
    </location>
    <ligand>
        <name>4-CDP-2-C-methyl-D-erythritol 2-phosphate</name>
        <dbReference type="ChEBI" id="CHEBI:57919"/>
    </ligand>
</feature>
<feature type="site" description="Transition state stabilizer" evidence="1">
    <location>
        <position position="34"/>
    </location>
</feature>
<feature type="site" description="Transition state stabilizer" evidence="1">
    <location>
        <position position="133"/>
    </location>
</feature>
<name>ISPF_PECAS</name>
<dbReference type="EC" id="4.6.1.12" evidence="1"/>
<dbReference type="EMBL" id="BX950851">
    <property type="protein sequence ID" value="CAG76432.1"/>
    <property type="molecule type" value="Genomic_DNA"/>
</dbReference>
<dbReference type="RefSeq" id="WP_010299845.1">
    <property type="nucleotide sequence ID" value="NC_004547.2"/>
</dbReference>
<dbReference type="SMR" id="Q6D1B4"/>
<dbReference type="STRING" id="218491.ECA3534"/>
<dbReference type="GeneID" id="93391518"/>
<dbReference type="KEGG" id="eca:ECA3534"/>
<dbReference type="eggNOG" id="COG0245">
    <property type="taxonomic scope" value="Bacteria"/>
</dbReference>
<dbReference type="HOGENOM" id="CLU_084630_2_0_6"/>
<dbReference type="OrthoDB" id="9804336at2"/>
<dbReference type="UniPathway" id="UPA00056">
    <property type="reaction ID" value="UER00095"/>
</dbReference>
<dbReference type="Proteomes" id="UP000007966">
    <property type="component" value="Chromosome"/>
</dbReference>
<dbReference type="GO" id="GO:0008685">
    <property type="term" value="F:2-C-methyl-D-erythritol 2,4-cyclodiphosphate synthase activity"/>
    <property type="evidence" value="ECO:0007669"/>
    <property type="project" value="UniProtKB-UniRule"/>
</dbReference>
<dbReference type="GO" id="GO:0046872">
    <property type="term" value="F:metal ion binding"/>
    <property type="evidence" value="ECO:0007669"/>
    <property type="project" value="UniProtKB-KW"/>
</dbReference>
<dbReference type="GO" id="GO:0019288">
    <property type="term" value="P:isopentenyl diphosphate biosynthetic process, methylerythritol 4-phosphate pathway"/>
    <property type="evidence" value="ECO:0007669"/>
    <property type="project" value="UniProtKB-UniRule"/>
</dbReference>
<dbReference type="GO" id="GO:0016114">
    <property type="term" value="P:terpenoid biosynthetic process"/>
    <property type="evidence" value="ECO:0007669"/>
    <property type="project" value="InterPro"/>
</dbReference>
<dbReference type="CDD" id="cd00554">
    <property type="entry name" value="MECDP_synthase"/>
    <property type="match status" value="1"/>
</dbReference>
<dbReference type="FunFam" id="3.30.1330.50:FF:000001">
    <property type="entry name" value="2-C-methyl-D-erythritol 2,4-cyclodiphosphate synthase"/>
    <property type="match status" value="1"/>
</dbReference>
<dbReference type="Gene3D" id="3.30.1330.50">
    <property type="entry name" value="2-C-methyl-D-erythritol 2,4-cyclodiphosphate synthase"/>
    <property type="match status" value="1"/>
</dbReference>
<dbReference type="HAMAP" id="MF_00107">
    <property type="entry name" value="IspF"/>
    <property type="match status" value="1"/>
</dbReference>
<dbReference type="InterPro" id="IPR003526">
    <property type="entry name" value="MECDP_synthase"/>
</dbReference>
<dbReference type="InterPro" id="IPR020555">
    <property type="entry name" value="MECDP_synthase_CS"/>
</dbReference>
<dbReference type="InterPro" id="IPR036571">
    <property type="entry name" value="MECDP_synthase_sf"/>
</dbReference>
<dbReference type="NCBIfam" id="TIGR00151">
    <property type="entry name" value="ispF"/>
    <property type="match status" value="1"/>
</dbReference>
<dbReference type="PANTHER" id="PTHR43181">
    <property type="entry name" value="2-C-METHYL-D-ERYTHRITOL 2,4-CYCLODIPHOSPHATE SYNTHASE, CHLOROPLASTIC"/>
    <property type="match status" value="1"/>
</dbReference>
<dbReference type="PANTHER" id="PTHR43181:SF1">
    <property type="entry name" value="2-C-METHYL-D-ERYTHRITOL 2,4-CYCLODIPHOSPHATE SYNTHASE, CHLOROPLASTIC"/>
    <property type="match status" value="1"/>
</dbReference>
<dbReference type="Pfam" id="PF02542">
    <property type="entry name" value="YgbB"/>
    <property type="match status" value="1"/>
</dbReference>
<dbReference type="SUPFAM" id="SSF69765">
    <property type="entry name" value="IpsF-like"/>
    <property type="match status" value="1"/>
</dbReference>
<dbReference type="PROSITE" id="PS01350">
    <property type="entry name" value="ISPF"/>
    <property type="match status" value="1"/>
</dbReference>
<comment type="function">
    <text evidence="1">Involved in the biosynthesis of isopentenyl diphosphate (IPP) and dimethylallyl diphosphate (DMAPP), two major building blocks of isoprenoid compounds. Catalyzes the conversion of 4-diphosphocytidyl-2-C-methyl-D-erythritol 2-phosphate (CDP-ME2P) to 2-C-methyl-D-erythritol 2,4-cyclodiphosphate (ME-CPP) with a corresponding release of cytidine 5-monophosphate (CMP).</text>
</comment>
<comment type="catalytic activity">
    <reaction evidence="1">
        <text>4-CDP-2-C-methyl-D-erythritol 2-phosphate = 2-C-methyl-D-erythritol 2,4-cyclic diphosphate + CMP</text>
        <dbReference type="Rhea" id="RHEA:23864"/>
        <dbReference type="ChEBI" id="CHEBI:57919"/>
        <dbReference type="ChEBI" id="CHEBI:58483"/>
        <dbReference type="ChEBI" id="CHEBI:60377"/>
        <dbReference type="EC" id="4.6.1.12"/>
    </reaction>
</comment>
<comment type="cofactor">
    <cofactor evidence="1">
        <name>a divalent metal cation</name>
        <dbReference type="ChEBI" id="CHEBI:60240"/>
    </cofactor>
    <text evidence="1">Binds 1 divalent metal cation per subunit.</text>
</comment>
<comment type="pathway">
    <text evidence="1">Isoprenoid biosynthesis; isopentenyl diphosphate biosynthesis via DXP pathway; isopentenyl diphosphate from 1-deoxy-D-xylulose 5-phosphate: step 4/6.</text>
</comment>
<comment type="subunit">
    <text evidence="1">Homotrimer.</text>
</comment>
<comment type="similarity">
    <text evidence="1">Belongs to the IspF family.</text>
</comment>
<reference key="1">
    <citation type="journal article" date="2004" name="Proc. Natl. Acad. Sci. U.S.A.">
        <title>Genome sequence of the enterobacterial phytopathogen Erwinia carotovora subsp. atroseptica and characterization of virulence factors.</title>
        <authorList>
            <person name="Bell K.S."/>
            <person name="Sebaihia M."/>
            <person name="Pritchard L."/>
            <person name="Holden M.T.G."/>
            <person name="Hyman L.J."/>
            <person name="Holeva M.C."/>
            <person name="Thomson N.R."/>
            <person name="Bentley S.D."/>
            <person name="Churcher L.J.C."/>
            <person name="Mungall K."/>
            <person name="Atkin R."/>
            <person name="Bason N."/>
            <person name="Brooks K."/>
            <person name="Chillingworth T."/>
            <person name="Clark K."/>
            <person name="Doggett J."/>
            <person name="Fraser A."/>
            <person name="Hance Z."/>
            <person name="Hauser H."/>
            <person name="Jagels K."/>
            <person name="Moule S."/>
            <person name="Norbertczak H."/>
            <person name="Ormond D."/>
            <person name="Price C."/>
            <person name="Quail M.A."/>
            <person name="Sanders M."/>
            <person name="Walker D."/>
            <person name="Whitehead S."/>
            <person name="Salmond G.P.C."/>
            <person name="Birch P.R.J."/>
            <person name="Parkhill J."/>
            <person name="Toth I.K."/>
        </authorList>
    </citation>
    <scope>NUCLEOTIDE SEQUENCE [LARGE SCALE GENOMIC DNA]</scope>
    <source>
        <strain>SCRI 1043 / ATCC BAA-672</strain>
    </source>
</reference>
<protein>
    <recommendedName>
        <fullName evidence="1">2-C-methyl-D-erythritol 2,4-cyclodiphosphate synthase</fullName>
        <shortName evidence="1">MECDP-synthase</shortName>
        <shortName evidence="1">MECPP-synthase</shortName>
        <shortName evidence="1">MECPS</shortName>
        <ecNumber evidence="1">4.6.1.12</ecNumber>
    </recommendedName>
</protein>
<sequence>MRIGHGFDVHKFGGEGPLVIGGVRIPYTQGLLAHSDGDVVLHAVTDALLGAAALGDIGKLFPDTDPAFKGADSRGLLREAWRRINDKGYQLGNLDVTIIAQAPKMAPHIPQMRVNLAEDLQCHMDDVNVKATTTEQLGFTGRGEGIACEAVALLVKKETGEIVAW</sequence>
<organism>
    <name type="scientific">Pectobacterium atrosepticum (strain SCRI 1043 / ATCC BAA-672)</name>
    <name type="common">Erwinia carotovora subsp. atroseptica</name>
    <dbReference type="NCBI Taxonomy" id="218491"/>
    <lineage>
        <taxon>Bacteria</taxon>
        <taxon>Pseudomonadati</taxon>
        <taxon>Pseudomonadota</taxon>
        <taxon>Gammaproteobacteria</taxon>
        <taxon>Enterobacterales</taxon>
        <taxon>Pectobacteriaceae</taxon>
        <taxon>Pectobacterium</taxon>
    </lineage>
</organism>
<gene>
    <name evidence="1" type="primary">ispF</name>
    <name type="ordered locus">ECA3534</name>
</gene>